<dbReference type="EMBL" id="AP008957">
    <property type="protein sequence ID" value="BAH34449.1"/>
    <property type="molecule type" value="Genomic_DNA"/>
</dbReference>
<dbReference type="RefSeq" id="WP_019749027.1">
    <property type="nucleotide sequence ID" value="NC_012490.1"/>
</dbReference>
<dbReference type="SMR" id="C1A1G4"/>
<dbReference type="GeneID" id="57486352"/>
<dbReference type="KEGG" id="rer:RER_37410"/>
<dbReference type="eggNOG" id="COG1420">
    <property type="taxonomic scope" value="Bacteria"/>
</dbReference>
<dbReference type="HOGENOM" id="CLU_050019_2_0_11"/>
<dbReference type="Proteomes" id="UP000002204">
    <property type="component" value="Chromosome"/>
</dbReference>
<dbReference type="GO" id="GO:0003677">
    <property type="term" value="F:DNA binding"/>
    <property type="evidence" value="ECO:0007669"/>
    <property type="project" value="InterPro"/>
</dbReference>
<dbReference type="GO" id="GO:0045892">
    <property type="term" value="P:negative regulation of DNA-templated transcription"/>
    <property type="evidence" value="ECO:0007669"/>
    <property type="project" value="UniProtKB-UniRule"/>
</dbReference>
<dbReference type="FunFam" id="1.10.10.10:FF:000049">
    <property type="entry name" value="Heat-inducible transcription repressor HrcA"/>
    <property type="match status" value="1"/>
</dbReference>
<dbReference type="Gene3D" id="3.30.450.40">
    <property type="match status" value="1"/>
</dbReference>
<dbReference type="Gene3D" id="3.30.390.60">
    <property type="entry name" value="Heat-inducible transcription repressor hrca homolog, domain 3"/>
    <property type="match status" value="1"/>
</dbReference>
<dbReference type="Gene3D" id="1.10.10.10">
    <property type="entry name" value="Winged helix-like DNA-binding domain superfamily/Winged helix DNA-binding domain"/>
    <property type="match status" value="1"/>
</dbReference>
<dbReference type="HAMAP" id="MF_00081">
    <property type="entry name" value="HrcA"/>
    <property type="match status" value="1"/>
</dbReference>
<dbReference type="InterPro" id="IPR029016">
    <property type="entry name" value="GAF-like_dom_sf"/>
</dbReference>
<dbReference type="InterPro" id="IPR002571">
    <property type="entry name" value="HrcA"/>
</dbReference>
<dbReference type="InterPro" id="IPR021153">
    <property type="entry name" value="HrcA_C"/>
</dbReference>
<dbReference type="InterPro" id="IPR036388">
    <property type="entry name" value="WH-like_DNA-bd_sf"/>
</dbReference>
<dbReference type="InterPro" id="IPR036390">
    <property type="entry name" value="WH_DNA-bd_sf"/>
</dbReference>
<dbReference type="InterPro" id="IPR023120">
    <property type="entry name" value="WHTH_transcript_rep_HrcA_IDD"/>
</dbReference>
<dbReference type="NCBIfam" id="TIGR00331">
    <property type="entry name" value="hrcA"/>
    <property type="match status" value="1"/>
</dbReference>
<dbReference type="PANTHER" id="PTHR34824">
    <property type="entry name" value="HEAT-INDUCIBLE TRANSCRIPTION REPRESSOR HRCA"/>
    <property type="match status" value="1"/>
</dbReference>
<dbReference type="PANTHER" id="PTHR34824:SF1">
    <property type="entry name" value="HEAT-INDUCIBLE TRANSCRIPTION REPRESSOR HRCA"/>
    <property type="match status" value="1"/>
</dbReference>
<dbReference type="Pfam" id="PF01628">
    <property type="entry name" value="HrcA"/>
    <property type="match status" value="1"/>
</dbReference>
<dbReference type="PIRSF" id="PIRSF005485">
    <property type="entry name" value="HrcA"/>
    <property type="match status" value="1"/>
</dbReference>
<dbReference type="SUPFAM" id="SSF55781">
    <property type="entry name" value="GAF domain-like"/>
    <property type="match status" value="1"/>
</dbReference>
<dbReference type="SUPFAM" id="SSF46785">
    <property type="entry name" value="Winged helix' DNA-binding domain"/>
    <property type="match status" value="1"/>
</dbReference>
<proteinExistence type="inferred from homology"/>
<evidence type="ECO:0000255" key="1">
    <source>
        <dbReference type="HAMAP-Rule" id="MF_00081"/>
    </source>
</evidence>
<protein>
    <recommendedName>
        <fullName evidence="1">Heat-inducible transcription repressor HrcA</fullName>
    </recommendedName>
</protein>
<name>HRCA_RHOE4</name>
<organism>
    <name type="scientific">Rhodococcus erythropolis (strain PR4 / NBRC 100887)</name>
    <dbReference type="NCBI Taxonomy" id="234621"/>
    <lineage>
        <taxon>Bacteria</taxon>
        <taxon>Bacillati</taxon>
        <taxon>Actinomycetota</taxon>
        <taxon>Actinomycetes</taxon>
        <taxon>Mycobacteriales</taxon>
        <taxon>Nocardiaceae</taxon>
        <taxon>Rhodococcus</taxon>
        <taxon>Rhodococcus erythropolis group</taxon>
    </lineage>
</organism>
<accession>C1A1G4</accession>
<keyword id="KW-0678">Repressor</keyword>
<keyword id="KW-0346">Stress response</keyword>
<keyword id="KW-0804">Transcription</keyword>
<keyword id="KW-0805">Transcription regulation</keyword>
<comment type="function">
    <text evidence="1">Negative regulator of class I heat shock genes (grpE-dnaK-dnaJ and groELS operons). Prevents heat-shock induction of these operons.</text>
</comment>
<comment type="similarity">
    <text evidence="1">Belongs to the HrcA family.</text>
</comment>
<reference key="1">
    <citation type="submission" date="2005-03" db="EMBL/GenBank/DDBJ databases">
        <title>Comparison of the complete genome sequences of Rhodococcus erythropolis PR4 and Rhodococcus opacus B4.</title>
        <authorList>
            <person name="Takarada H."/>
            <person name="Sekine M."/>
            <person name="Hosoyama A."/>
            <person name="Yamada R."/>
            <person name="Fujisawa T."/>
            <person name="Omata S."/>
            <person name="Shimizu A."/>
            <person name="Tsukatani N."/>
            <person name="Tanikawa S."/>
            <person name="Fujita N."/>
            <person name="Harayama S."/>
        </authorList>
    </citation>
    <scope>NUCLEOTIDE SEQUENCE [LARGE SCALE GENOMIC DNA]</scope>
    <source>
        <strain>PR4 / NBRC 100887</strain>
    </source>
</reference>
<sequence length="347" mass="37016">MSSTDDRRFEVLRAIVADYVSTQDPVGSKALVERHNLGVSSATVRNDMAFLEAEGYIAQPHTSSGRVPTDKGYREFVDRIADVKPMSGPERRAILEFLESGVDLDDVLRRGVRLLAQLTRQVAVVQYPSLSASSVRHLEVVALTPARLLLVLITDSGRVDQRIVELGDVLEDEDLSRLRALLGGALEGKRLAAASIAVAELADESPADLRDAVIRSATVLVETLVEHPEDRLVLGGTSNLTRNAADFSGLAGFPGSLRAVLEALEEQVVVLKLLAATQNSGTVTVQIGEETQVEQMRGTSVISTGYGAAGTVFGGVGVLGPTRMDYPGTIASVAAVARYIGEVLSER</sequence>
<gene>
    <name evidence="1" type="primary">hrcA</name>
    <name type="ordered locus">RER_37410</name>
</gene>
<feature type="chain" id="PRO_1000202553" description="Heat-inducible transcription repressor HrcA">
    <location>
        <begin position="1"/>
        <end position="347"/>
    </location>
</feature>